<keyword id="KW-1003">Cell membrane</keyword>
<keyword id="KW-0472">Membrane</keyword>
<keyword id="KW-1185">Reference proteome</keyword>
<keyword id="KW-0812">Transmembrane</keyword>
<keyword id="KW-1133">Transmembrane helix</keyword>
<keyword id="KW-0813">Transport</keyword>
<organism>
    <name type="scientific">Brucella anthropi (strain ATCC 49188 / DSM 6882 / CCUG 24695 / JCM 21032 / LMG 3331 / NBRC 15819 / NCTC 12168 / Alc 37)</name>
    <name type="common">Ochrobactrum anthropi</name>
    <dbReference type="NCBI Taxonomy" id="439375"/>
    <lineage>
        <taxon>Bacteria</taxon>
        <taxon>Pseudomonadati</taxon>
        <taxon>Pseudomonadota</taxon>
        <taxon>Alphaproteobacteria</taxon>
        <taxon>Hyphomicrobiales</taxon>
        <taxon>Brucellaceae</taxon>
        <taxon>Brucella/Ochrobactrum group</taxon>
        <taxon>Brucella</taxon>
    </lineage>
</organism>
<dbReference type="EMBL" id="CP000759">
    <property type="protein sequence ID" value="ABS17151.1"/>
    <property type="molecule type" value="Genomic_DNA"/>
</dbReference>
<dbReference type="RefSeq" id="WP_010660541.1">
    <property type="nucleotide sequence ID" value="NC_009668.1"/>
</dbReference>
<dbReference type="SMR" id="A6X7E7"/>
<dbReference type="STRING" id="439375.Oant_4451"/>
<dbReference type="TCDB" id="2.A.1.81.5">
    <property type="family name" value="the major facilitator superfamily (mfs)"/>
</dbReference>
<dbReference type="KEGG" id="oan:Oant_4451"/>
<dbReference type="PATRIC" id="fig|439375.7.peg.4627"/>
<dbReference type="eggNOG" id="COG2814">
    <property type="taxonomic scope" value="Bacteria"/>
</dbReference>
<dbReference type="HOGENOM" id="CLU_047644_2_0_5"/>
<dbReference type="Proteomes" id="UP000002301">
    <property type="component" value="Chromosome 2"/>
</dbReference>
<dbReference type="GO" id="GO:0005886">
    <property type="term" value="C:plasma membrane"/>
    <property type="evidence" value="ECO:0007669"/>
    <property type="project" value="UniProtKB-SubCell"/>
</dbReference>
<dbReference type="GO" id="GO:0022857">
    <property type="term" value="F:transmembrane transporter activity"/>
    <property type="evidence" value="ECO:0007669"/>
    <property type="project" value="InterPro"/>
</dbReference>
<dbReference type="Gene3D" id="1.20.1250.20">
    <property type="entry name" value="MFS general substrate transporter like domains"/>
    <property type="match status" value="1"/>
</dbReference>
<dbReference type="InterPro" id="IPR011701">
    <property type="entry name" value="MFS"/>
</dbReference>
<dbReference type="InterPro" id="IPR020846">
    <property type="entry name" value="MFS_dom"/>
</dbReference>
<dbReference type="InterPro" id="IPR036259">
    <property type="entry name" value="MFS_trans_sf"/>
</dbReference>
<dbReference type="PANTHER" id="PTHR23534:SF1">
    <property type="entry name" value="MAJOR FACILITATOR SUPERFAMILY PROTEIN"/>
    <property type="match status" value="1"/>
</dbReference>
<dbReference type="PANTHER" id="PTHR23534">
    <property type="entry name" value="MFS PERMEASE"/>
    <property type="match status" value="1"/>
</dbReference>
<dbReference type="Pfam" id="PF07690">
    <property type="entry name" value="MFS_1"/>
    <property type="match status" value="1"/>
</dbReference>
<dbReference type="SUPFAM" id="SSF103473">
    <property type="entry name" value="MFS general substrate transporter"/>
    <property type="match status" value="1"/>
</dbReference>
<dbReference type="PROSITE" id="PS50850">
    <property type="entry name" value="MFS"/>
    <property type="match status" value="1"/>
</dbReference>
<sequence length="398" mass="41659">MTDATAARRNIVILTIAQALGASSPPIVISLGGLVGQKLSSDPALVTLPVSLFNLGLALGTLPAAFFMRQFGRRNAYMLGALVGAAAGVIAAAGIFAASFLIFCLGTLTAGFYASYVQSYRFAATDAATGDMKARAISWVMVGGLVAAIVGPQLVIWTRDTIPDAMFAGSFLSQAVLGLLALPVLFMLRAPKVRKDPNAIHDTGRPLGEILRSPRFILSVAAGVCSYALMTFVMTAAPIAMVGHGHSVDHAALGIQWHVLAMFAPSFFTGKLITRFGKEKITALGLVLIAFSAIIALGGFDVGHFWGALIFLGIGWNFGFIGATAMVTDCHTPAERGKAQGANDFIMFGTVACASFFAGSLLHSSGWETINWLVFPIVALVLVPLILRLKPKGAAAEA</sequence>
<protein>
    <recommendedName>
        <fullName evidence="4">Riboflavin transporter RfnT</fullName>
    </recommendedName>
</protein>
<name>RFNT_BRUA4</name>
<accession>A6X7E7</accession>
<reference key="1">
    <citation type="journal article" date="2011" name="J. Bacteriol.">
        <title>Genome of Ochrobactrum anthropi ATCC 49188 T, a versatile opportunistic pathogen and symbiont of several eukaryotic hosts.</title>
        <authorList>
            <person name="Chain P.S."/>
            <person name="Lang D.M."/>
            <person name="Comerci D.J."/>
            <person name="Malfatti S.A."/>
            <person name="Vergez L.M."/>
            <person name="Shin M."/>
            <person name="Ugalde R.A."/>
            <person name="Garcia E."/>
            <person name="Tolmasky M.E."/>
        </authorList>
    </citation>
    <scope>NUCLEOTIDE SEQUENCE [LARGE SCALE GENOMIC DNA]</scope>
    <source>
        <strain>ATCC 49188 / DSM 6882 / CCUG 24695 / JCM 21032 / LMG 3331 / NBRC 15819 / NCTC 12168 / Alc 37</strain>
    </source>
</reference>
<reference key="2">
    <citation type="journal article" date="2015" name="PLoS ONE">
        <title>Extensive identification of bacterial riboflavin transporters and their distribution across bacterial species.</title>
        <authorList>
            <person name="Gutierrez-Preciado A."/>
            <person name="Torres A.G."/>
            <person name="Merino E."/>
            <person name="Bonomi H.R."/>
            <person name="Goldbaum F.A."/>
            <person name="Garcia-Angulo V.A."/>
        </authorList>
    </citation>
    <scope>FUNCTION AS A TRANSPORTER</scope>
    <source>
        <strain>ATCC 49188 / DSM 6882 / CCUG 24695 / JCM 21032 / LMG 3331 / NBRC 15819 / NCTC 12168 / Alc 37</strain>
    </source>
</reference>
<gene>
    <name evidence="3" type="primary">rfnT</name>
    <name evidence="5" type="ordered locus">Oant_4451</name>
</gene>
<proteinExistence type="evidence at protein level"/>
<evidence type="ECO:0000255" key="1"/>
<evidence type="ECO:0000269" key="2">
    <source>
    </source>
</evidence>
<evidence type="ECO:0000303" key="3">
    <source>
    </source>
</evidence>
<evidence type="ECO:0000305" key="4"/>
<evidence type="ECO:0000312" key="5">
    <source>
        <dbReference type="EMBL" id="ABS17151.1"/>
    </source>
</evidence>
<comment type="function">
    <text evidence="2">Transports riboflavin into the cell.</text>
</comment>
<comment type="subcellular location">
    <subcellularLocation>
        <location evidence="4">Cell membrane</location>
        <topology evidence="1">Multi-pass membrane protein</topology>
    </subcellularLocation>
</comment>
<comment type="similarity">
    <text evidence="4">Belongs to the major facilitator superfamily.</text>
</comment>
<feature type="chain" id="PRO_0000438274" description="Riboflavin transporter RfnT">
    <location>
        <begin position="1"/>
        <end position="398"/>
    </location>
</feature>
<feature type="transmembrane region" description="Helical" evidence="1">
    <location>
        <begin position="13"/>
        <end position="35"/>
    </location>
</feature>
<feature type="transmembrane region" description="Helical" evidence="1">
    <location>
        <begin position="45"/>
        <end position="67"/>
    </location>
</feature>
<feature type="transmembrane region" description="Helical" evidence="1">
    <location>
        <begin position="74"/>
        <end position="91"/>
    </location>
</feature>
<feature type="transmembrane region" description="Helical" evidence="1">
    <location>
        <begin position="95"/>
        <end position="117"/>
    </location>
</feature>
<feature type="transmembrane region" description="Helical" evidence="1">
    <location>
        <begin position="137"/>
        <end position="156"/>
    </location>
</feature>
<feature type="transmembrane region" description="Helical" evidence="1">
    <location>
        <begin position="166"/>
        <end position="188"/>
    </location>
</feature>
<feature type="transmembrane region" description="Helical" evidence="1">
    <location>
        <begin position="220"/>
        <end position="242"/>
    </location>
</feature>
<feature type="transmembrane region" description="Helical" evidence="1">
    <location>
        <begin position="252"/>
        <end position="274"/>
    </location>
</feature>
<feature type="transmembrane region" description="Helical" evidence="1">
    <location>
        <begin position="281"/>
        <end position="300"/>
    </location>
</feature>
<feature type="transmembrane region" description="Helical" evidence="1">
    <location>
        <begin position="305"/>
        <end position="324"/>
    </location>
</feature>
<feature type="transmembrane region" description="Helical" evidence="1">
    <location>
        <begin position="345"/>
        <end position="367"/>
    </location>
</feature>
<feature type="transmembrane region" description="Helical" evidence="1">
    <location>
        <begin position="372"/>
        <end position="389"/>
    </location>
</feature>